<organism>
    <name type="scientific">Bacillus thuringiensis subsp. konkukian (strain 97-27)</name>
    <dbReference type="NCBI Taxonomy" id="281309"/>
    <lineage>
        <taxon>Bacteria</taxon>
        <taxon>Bacillati</taxon>
        <taxon>Bacillota</taxon>
        <taxon>Bacilli</taxon>
        <taxon>Bacillales</taxon>
        <taxon>Bacillaceae</taxon>
        <taxon>Bacillus</taxon>
        <taxon>Bacillus cereus group</taxon>
    </lineage>
</organism>
<feature type="chain" id="PRO_0000229306" description="ATP phosphoribosyltransferase">
    <location>
        <begin position="1"/>
        <end position="211"/>
    </location>
</feature>
<gene>
    <name evidence="1" type="primary">hisG</name>
    <name type="ordered locus">BT9727_1289</name>
</gene>
<name>HIS1_BACHK</name>
<protein>
    <recommendedName>
        <fullName evidence="1">ATP phosphoribosyltransferase</fullName>
        <shortName evidence="1">ATP-PRT</shortName>
        <shortName evidence="1">ATP-PRTase</shortName>
        <ecNumber evidence="1">2.4.2.17</ecNumber>
    </recommendedName>
</protein>
<accession>Q6HLE8</accession>
<dbReference type="EC" id="2.4.2.17" evidence="1"/>
<dbReference type="EMBL" id="AE017355">
    <property type="protein sequence ID" value="AAT59417.1"/>
    <property type="molecule type" value="Genomic_DNA"/>
</dbReference>
<dbReference type="RefSeq" id="WP_001244473.1">
    <property type="nucleotide sequence ID" value="NC_005957.1"/>
</dbReference>
<dbReference type="RefSeq" id="YP_035623.1">
    <property type="nucleotide sequence ID" value="NC_005957.1"/>
</dbReference>
<dbReference type="SMR" id="Q6HLE8"/>
<dbReference type="KEGG" id="btk:BT9727_1289"/>
<dbReference type="PATRIC" id="fig|281309.8.peg.1358"/>
<dbReference type="HOGENOM" id="CLU_038115_2_0_9"/>
<dbReference type="UniPathway" id="UPA00031">
    <property type="reaction ID" value="UER00006"/>
</dbReference>
<dbReference type="Proteomes" id="UP000001301">
    <property type="component" value="Chromosome"/>
</dbReference>
<dbReference type="GO" id="GO:0005737">
    <property type="term" value="C:cytoplasm"/>
    <property type="evidence" value="ECO:0007669"/>
    <property type="project" value="UniProtKB-SubCell"/>
</dbReference>
<dbReference type="GO" id="GO:0005524">
    <property type="term" value="F:ATP binding"/>
    <property type="evidence" value="ECO:0007669"/>
    <property type="project" value="UniProtKB-KW"/>
</dbReference>
<dbReference type="GO" id="GO:0003879">
    <property type="term" value="F:ATP phosphoribosyltransferase activity"/>
    <property type="evidence" value="ECO:0007669"/>
    <property type="project" value="UniProtKB-UniRule"/>
</dbReference>
<dbReference type="GO" id="GO:0000105">
    <property type="term" value="P:L-histidine biosynthetic process"/>
    <property type="evidence" value="ECO:0007669"/>
    <property type="project" value="UniProtKB-UniRule"/>
</dbReference>
<dbReference type="CDD" id="cd13595">
    <property type="entry name" value="PBP2_HisGs"/>
    <property type="match status" value="1"/>
</dbReference>
<dbReference type="FunFam" id="3.40.190.10:FF:000011">
    <property type="entry name" value="ATP phosphoribosyltransferase"/>
    <property type="match status" value="1"/>
</dbReference>
<dbReference type="Gene3D" id="3.40.190.10">
    <property type="entry name" value="Periplasmic binding protein-like II"/>
    <property type="match status" value="2"/>
</dbReference>
<dbReference type="HAMAP" id="MF_01018">
    <property type="entry name" value="HisG_Short"/>
    <property type="match status" value="1"/>
</dbReference>
<dbReference type="InterPro" id="IPR013820">
    <property type="entry name" value="ATP_PRibTrfase_cat"/>
</dbReference>
<dbReference type="InterPro" id="IPR018198">
    <property type="entry name" value="ATP_PRibTrfase_CS"/>
</dbReference>
<dbReference type="InterPro" id="IPR001348">
    <property type="entry name" value="ATP_PRibTrfase_HisG"/>
</dbReference>
<dbReference type="InterPro" id="IPR024893">
    <property type="entry name" value="ATP_PRibTrfase_HisG_short"/>
</dbReference>
<dbReference type="NCBIfam" id="TIGR00070">
    <property type="entry name" value="hisG"/>
    <property type="match status" value="1"/>
</dbReference>
<dbReference type="PANTHER" id="PTHR21403:SF8">
    <property type="entry name" value="ATP PHOSPHORIBOSYLTRANSFERASE"/>
    <property type="match status" value="1"/>
</dbReference>
<dbReference type="PANTHER" id="PTHR21403">
    <property type="entry name" value="ATP PHOSPHORIBOSYLTRANSFERASE ATP-PRTASE"/>
    <property type="match status" value="1"/>
</dbReference>
<dbReference type="Pfam" id="PF01634">
    <property type="entry name" value="HisG"/>
    <property type="match status" value="1"/>
</dbReference>
<dbReference type="SUPFAM" id="SSF53850">
    <property type="entry name" value="Periplasmic binding protein-like II"/>
    <property type="match status" value="1"/>
</dbReference>
<dbReference type="PROSITE" id="PS01316">
    <property type="entry name" value="ATP_P_PHORIBOSYLTR"/>
    <property type="match status" value="1"/>
</dbReference>
<comment type="function">
    <text evidence="1">Catalyzes the condensation of ATP and 5-phosphoribose 1-diphosphate to form N'-(5'-phosphoribosyl)-ATP (PR-ATP). Has a crucial role in the pathway because the rate of histidine biosynthesis seems to be controlled primarily by regulation of HisG enzymatic activity.</text>
</comment>
<comment type="catalytic activity">
    <reaction evidence="1">
        <text>1-(5-phospho-beta-D-ribosyl)-ATP + diphosphate = 5-phospho-alpha-D-ribose 1-diphosphate + ATP</text>
        <dbReference type="Rhea" id="RHEA:18473"/>
        <dbReference type="ChEBI" id="CHEBI:30616"/>
        <dbReference type="ChEBI" id="CHEBI:33019"/>
        <dbReference type="ChEBI" id="CHEBI:58017"/>
        <dbReference type="ChEBI" id="CHEBI:73183"/>
        <dbReference type="EC" id="2.4.2.17"/>
    </reaction>
</comment>
<comment type="pathway">
    <text evidence="1">Amino-acid biosynthesis; L-histidine biosynthesis; L-histidine from 5-phospho-alpha-D-ribose 1-diphosphate: step 1/9.</text>
</comment>
<comment type="subunit">
    <text evidence="1">Heteromultimer composed of HisG and HisZ subunits.</text>
</comment>
<comment type="subcellular location">
    <subcellularLocation>
        <location evidence="1">Cytoplasm</location>
    </subcellularLocation>
</comment>
<comment type="domain">
    <text>Lacks the C-terminal regulatory region which is replaced by HisZ.</text>
</comment>
<comment type="similarity">
    <text evidence="1">Belongs to the ATP phosphoribosyltransferase family. Short subfamily.</text>
</comment>
<sequence>MRNIQIALTKGRLEKHVIPLFEQIGIDCSELKNKGRKLVFQSKNTDISFILVKAVDVATYVEHGVADIGVVGKDILMENEKDIYEMLDLGVGVCKFCVASIPTYNPKSYRKKCIATKYPHITSNYFHNKGEDVEIIKIEGSVEIAPILGLADAIVDIVETGKTLQENGLIVFEEMYSISARMIVNKAALKTKKDEIFSIVNMMEQEILSGK</sequence>
<reference key="1">
    <citation type="journal article" date="2006" name="J. Bacteriol.">
        <title>Pathogenomic sequence analysis of Bacillus cereus and Bacillus thuringiensis isolates closely related to Bacillus anthracis.</title>
        <authorList>
            <person name="Han C.S."/>
            <person name="Xie G."/>
            <person name="Challacombe J.F."/>
            <person name="Altherr M.R."/>
            <person name="Bhotika S.S."/>
            <person name="Bruce D."/>
            <person name="Campbell C.S."/>
            <person name="Campbell M.L."/>
            <person name="Chen J."/>
            <person name="Chertkov O."/>
            <person name="Cleland C."/>
            <person name="Dimitrijevic M."/>
            <person name="Doggett N.A."/>
            <person name="Fawcett J.J."/>
            <person name="Glavina T."/>
            <person name="Goodwin L.A."/>
            <person name="Hill K.K."/>
            <person name="Hitchcock P."/>
            <person name="Jackson P.J."/>
            <person name="Keim P."/>
            <person name="Kewalramani A.R."/>
            <person name="Longmire J."/>
            <person name="Lucas S."/>
            <person name="Malfatti S."/>
            <person name="McMurry K."/>
            <person name="Meincke L.J."/>
            <person name="Misra M."/>
            <person name="Moseman B.L."/>
            <person name="Mundt M."/>
            <person name="Munk A.C."/>
            <person name="Okinaka R.T."/>
            <person name="Parson-Quintana B."/>
            <person name="Reilly L.P."/>
            <person name="Richardson P."/>
            <person name="Robinson D.L."/>
            <person name="Rubin E."/>
            <person name="Saunders E."/>
            <person name="Tapia R."/>
            <person name="Tesmer J.G."/>
            <person name="Thayer N."/>
            <person name="Thompson L.S."/>
            <person name="Tice H."/>
            <person name="Ticknor L.O."/>
            <person name="Wills P.L."/>
            <person name="Brettin T.S."/>
            <person name="Gilna P."/>
        </authorList>
    </citation>
    <scope>NUCLEOTIDE SEQUENCE [LARGE SCALE GENOMIC DNA]</scope>
    <source>
        <strain>97-27</strain>
    </source>
</reference>
<evidence type="ECO:0000255" key="1">
    <source>
        <dbReference type="HAMAP-Rule" id="MF_01018"/>
    </source>
</evidence>
<proteinExistence type="inferred from homology"/>
<keyword id="KW-0028">Amino-acid biosynthesis</keyword>
<keyword id="KW-0067">ATP-binding</keyword>
<keyword id="KW-0963">Cytoplasm</keyword>
<keyword id="KW-0328">Glycosyltransferase</keyword>
<keyword id="KW-0368">Histidine biosynthesis</keyword>
<keyword id="KW-0547">Nucleotide-binding</keyword>
<keyword id="KW-0808">Transferase</keyword>